<evidence type="ECO:0000255" key="1">
    <source>
        <dbReference type="HAMAP-Rule" id="MF_00267"/>
    </source>
</evidence>
<evidence type="ECO:0000256" key="2">
    <source>
        <dbReference type="SAM" id="MobiDB-lite"/>
    </source>
</evidence>
<accession>P65360</accession>
<accession>Q8XEJ9</accession>
<sequence length="235" mass="25246">MSNTPIELKGSSFTLSVVHLHEAEPEVIRQALEDKIAQAPAFLKHAPVVINVSGLESPVNWPELHKIVTSTGLRIIGVSGCKDASLKVEIDRMGLPLLTEGKEKAVRPAPVEPATPSEPPQNANPITKTRLIDVPVRSGQRIYAPQCDLIVTSHVSAGAELIADGNIHVYGMMRGRALAGASGDREAQIFCTHLTAELVSIAGVYWLSDKIPAEFYGKAARLRLADNALTVQPLN</sequence>
<dbReference type="EMBL" id="AL513382">
    <property type="protein sequence ID" value="CAD05497.1"/>
    <property type="molecule type" value="Genomic_DNA"/>
</dbReference>
<dbReference type="EMBL" id="AE014613">
    <property type="protein sequence ID" value="AAO68729.1"/>
    <property type="molecule type" value="Genomic_DNA"/>
</dbReference>
<dbReference type="RefSeq" id="NP_456321.1">
    <property type="nucleotide sequence ID" value="NC_003198.1"/>
</dbReference>
<dbReference type="RefSeq" id="WP_000072527.1">
    <property type="nucleotide sequence ID" value="NZ_WSUR01000004.1"/>
</dbReference>
<dbReference type="SMR" id="P65360"/>
<dbReference type="STRING" id="220341.gene:17585862"/>
<dbReference type="KEGG" id="stt:t1063"/>
<dbReference type="KEGG" id="sty:STY1944"/>
<dbReference type="PATRIC" id="fig|220341.7.peg.1961"/>
<dbReference type="eggNOG" id="COG0850">
    <property type="taxonomic scope" value="Bacteria"/>
</dbReference>
<dbReference type="HOGENOM" id="CLU_067812_0_1_6"/>
<dbReference type="OMA" id="RRDPLWG"/>
<dbReference type="OrthoDB" id="9794530at2"/>
<dbReference type="Proteomes" id="UP000000541">
    <property type="component" value="Chromosome"/>
</dbReference>
<dbReference type="Proteomes" id="UP000002670">
    <property type="component" value="Chromosome"/>
</dbReference>
<dbReference type="GO" id="GO:0000902">
    <property type="term" value="P:cell morphogenesis"/>
    <property type="evidence" value="ECO:0007669"/>
    <property type="project" value="InterPro"/>
</dbReference>
<dbReference type="GO" id="GO:0000917">
    <property type="term" value="P:division septum assembly"/>
    <property type="evidence" value="ECO:0007669"/>
    <property type="project" value="UniProtKB-KW"/>
</dbReference>
<dbReference type="GO" id="GO:0051302">
    <property type="term" value="P:regulation of cell division"/>
    <property type="evidence" value="ECO:0007669"/>
    <property type="project" value="InterPro"/>
</dbReference>
<dbReference type="GO" id="GO:1901891">
    <property type="term" value="P:regulation of cell septum assembly"/>
    <property type="evidence" value="ECO:0007669"/>
    <property type="project" value="InterPro"/>
</dbReference>
<dbReference type="FunFam" id="2.160.20.70:FF:000002">
    <property type="entry name" value="Probable septum site-determining protein MinC"/>
    <property type="match status" value="1"/>
</dbReference>
<dbReference type="Gene3D" id="2.160.20.70">
    <property type="match status" value="1"/>
</dbReference>
<dbReference type="Gene3D" id="3.30.70.260">
    <property type="match status" value="1"/>
</dbReference>
<dbReference type="HAMAP" id="MF_00267">
    <property type="entry name" value="MinC"/>
    <property type="match status" value="1"/>
</dbReference>
<dbReference type="InterPro" id="IPR016098">
    <property type="entry name" value="CAP/MinC_C"/>
</dbReference>
<dbReference type="InterPro" id="IPR013033">
    <property type="entry name" value="MinC"/>
</dbReference>
<dbReference type="InterPro" id="IPR036145">
    <property type="entry name" value="MinC_C_sf"/>
</dbReference>
<dbReference type="InterPro" id="IPR007874">
    <property type="entry name" value="MinC_N"/>
</dbReference>
<dbReference type="InterPro" id="IPR005526">
    <property type="entry name" value="Septum_form_inhib_MinC_C"/>
</dbReference>
<dbReference type="NCBIfam" id="TIGR01222">
    <property type="entry name" value="minC"/>
    <property type="match status" value="1"/>
</dbReference>
<dbReference type="PANTHER" id="PTHR34108">
    <property type="entry name" value="SEPTUM SITE-DETERMINING PROTEIN MINC"/>
    <property type="match status" value="1"/>
</dbReference>
<dbReference type="PANTHER" id="PTHR34108:SF1">
    <property type="entry name" value="SEPTUM SITE-DETERMINING PROTEIN MINC"/>
    <property type="match status" value="1"/>
</dbReference>
<dbReference type="Pfam" id="PF03775">
    <property type="entry name" value="MinC_C"/>
    <property type="match status" value="1"/>
</dbReference>
<dbReference type="Pfam" id="PF05209">
    <property type="entry name" value="MinC_N"/>
    <property type="match status" value="1"/>
</dbReference>
<dbReference type="SUPFAM" id="SSF63848">
    <property type="entry name" value="Cell-division inhibitor MinC, C-terminal domain"/>
    <property type="match status" value="1"/>
</dbReference>
<feature type="chain" id="PRO_0000189061" description="Septum site-determining protein MinC">
    <location>
        <begin position="1"/>
        <end position="235"/>
    </location>
</feature>
<feature type="region of interest" description="Disordered" evidence="2">
    <location>
        <begin position="104"/>
        <end position="125"/>
    </location>
</feature>
<feature type="compositionally biased region" description="Pro residues" evidence="2">
    <location>
        <begin position="110"/>
        <end position="119"/>
    </location>
</feature>
<name>MINC_SALTI</name>
<reference key="1">
    <citation type="journal article" date="2001" name="Nature">
        <title>Complete genome sequence of a multiple drug resistant Salmonella enterica serovar Typhi CT18.</title>
        <authorList>
            <person name="Parkhill J."/>
            <person name="Dougan G."/>
            <person name="James K.D."/>
            <person name="Thomson N.R."/>
            <person name="Pickard D."/>
            <person name="Wain J."/>
            <person name="Churcher C.M."/>
            <person name="Mungall K.L."/>
            <person name="Bentley S.D."/>
            <person name="Holden M.T.G."/>
            <person name="Sebaihia M."/>
            <person name="Baker S."/>
            <person name="Basham D."/>
            <person name="Brooks K."/>
            <person name="Chillingworth T."/>
            <person name="Connerton P."/>
            <person name="Cronin A."/>
            <person name="Davis P."/>
            <person name="Davies R.M."/>
            <person name="Dowd L."/>
            <person name="White N."/>
            <person name="Farrar J."/>
            <person name="Feltwell T."/>
            <person name="Hamlin N."/>
            <person name="Haque A."/>
            <person name="Hien T.T."/>
            <person name="Holroyd S."/>
            <person name="Jagels K."/>
            <person name="Krogh A."/>
            <person name="Larsen T.S."/>
            <person name="Leather S."/>
            <person name="Moule S."/>
            <person name="O'Gaora P."/>
            <person name="Parry C."/>
            <person name="Quail M.A."/>
            <person name="Rutherford K.M."/>
            <person name="Simmonds M."/>
            <person name="Skelton J."/>
            <person name="Stevens K."/>
            <person name="Whitehead S."/>
            <person name="Barrell B.G."/>
        </authorList>
    </citation>
    <scope>NUCLEOTIDE SEQUENCE [LARGE SCALE GENOMIC DNA]</scope>
    <source>
        <strain>CT18</strain>
    </source>
</reference>
<reference key="2">
    <citation type="journal article" date="2003" name="J. Bacteriol.">
        <title>Comparative genomics of Salmonella enterica serovar Typhi strains Ty2 and CT18.</title>
        <authorList>
            <person name="Deng W."/>
            <person name="Liou S.-R."/>
            <person name="Plunkett G. III"/>
            <person name="Mayhew G.F."/>
            <person name="Rose D.J."/>
            <person name="Burland V."/>
            <person name="Kodoyianni V."/>
            <person name="Schwartz D.C."/>
            <person name="Blattner F.R."/>
        </authorList>
    </citation>
    <scope>NUCLEOTIDE SEQUENCE [LARGE SCALE GENOMIC DNA]</scope>
    <source>
        <strain>ATCC 700931 / Ty2</strain>
    </source>
</reference>
<proteinExistence type="inferred from homology"/>
<keyword id="KW-0131">Cell cycle</keyword>
<keyword id="KW-0132">Cell division</keyword>
<keyword id="KW-0717">Septation</keyword>
<gene>
    <name evidence="1" type="primary">minC</name>
    <name type="ordered locus">STY1944</name>
    <name type="ordered locus">t1063</name>
</gene>
<protein>
    <recommendedName>
        <fullName>Septum site-determining protein MinC</fullName>
    </recommendedName>
</protein>
<organism>
    <name type="scientific">Salmonella typhi</name>
    <dbReference type="NCBI Taxonomy" id="90370"/>
    <lineage>
        <taxon>Bacteria</taxon>
        <taxon>Pseudomonadati</taxon>
        <taxon>Pseudomonadota</taxon>
        <taxon>Gammaproteobacteria</taxon>
        <taxon>Enterobacterales</taxon>
        <taxon>Enterobacteriaceae</taxon>
        <taxon>Salmonella</taxon>
    </lineage>
</organism>
<comment type="function">
    <text evidence="1">Cell division inhibitor that blocks the formation of polar Z ring septums. Rapidly oscillates between the poles of the cell to destabilize FtsZ filaments that have formed before they mature into polar Z rings. Prevents FtsZ polymerization.</text>
</comment>
<comment type="subunit">
    <text evidence="1">Interacts with MinD and FtsZ.</text>
</comment>
<comment type="similarity">
    <text evidence="1">Belongs to the MinC family.</text>
</comment>